<accession>P38188</accession>
<proteinExistence type="uncertain"/>
<dbReference type="EMBL" id="Z35827">
    <property type="protein sequence ID" value="CAA84886.1"/>
    <property type="molecule type" value="Genomic_DNA"/>
</dbReference>
<dbReference type="PIR" id="S45800">
    <property type="entry name" value="S45800"/>
</dbReference>
<dbReference type="DIP" id="DIP-5296N"/>
<dbReference type="STRING" id="4932.YBL065W"/>
<dbReference type="PaxDb" id="4932-YBL065W"/>
<dbReference type="EnsemblFungi" id="YBL065W_mRNA">
    <property type="protein sequence ID" value="YBL065W"/>
    <property type="gene ID" value="YBL065W"/>
</dbReference>
<dbReference type="AGR" id="SGD:S000000161"/>
<dbReference type="SGD" id="S000000161">
    <property type="gene designation" value="YBL065W"/>
</dbReference>
<dbReference type="HOGENOM" id="CLU_2122981_0_0_1"/>
<feature type="chain" id="PRO_0000202452" description="Putative uncharacterized protein YBL065W">
    <location>
        <begin position="1"/>
        <end position="114"/>
    </location>
</feature>
<sequence length="114" mass="13830">MVDLMTVIMVRYSLFLTWELVLLQLLLLRLSFHVSRTKILVLVRISIILHHDENAYTQSQYNLYTGPLTLRFLQRVYYMHFHIYIFNAIPLRYVKKNDPMSGPSYEMRYNKNER</sequence>
<name>YBG5_YEAST</name>
<evidence type="ECO:0000305" key="1"/>
<evidence type="ECO:0000305" key="2">
    <source>
    </source>
</evidence>
<organism>
    <name type="scientific">Saccharomyces cerevisiae (strain ATCC 204508 / S288c)</name>
    <name type="common">Baker's yeast</name>
    <dbReference type="NCBI Taxonomy" id="559292"/>
    <lineage>
        <taxon>Eukaryota</taxon>
        <taxon>Fungi</taxon>
        <taxon>Dikarya</taxon>
        <taxon>Ascomycota</taxon>
        <taxon>Saccharomycotina</taxon>
        <taxon>Saccharomycetes</taxon>
        <taxon>Saccharomycetales</taxon>
        <taxon>Saccharomycetaceae</taxon>
        <taxon>Saccharomyces</taxon>
    </lineage>
</organism>
<gene>
    <name type="ordered locus">YBL065W</name>
    <name type="ORF">YBL0502</name>
</gene>
<protein>
    <recommendedName>
        <fullName>Putative uncharacterized protein YBL065W</fullName>
    </recommendedName>
</protein>
<comment type="miscellaneous">
    <text evidence="1">Partially overlaps SEF1.</text>
</comment>
<comment type="caution">
    <text evidence="2">Product of a dubious gene prediction unlikely to encode a functional protein. Because of that it is not part of the S.cerevisiae S288c complete/reference proteome set.</text>
</comment>
<reference key="1">
    <citation type="journal article" date="1994" name="EMBO J.">
        <title>Complete DNA sequence of yeast chromosome II.</title>
        <authorList>
            <person name="Feldmann H."/>
            <person name="Aigle M."/>
            <person name="Aljinovic G."/>
            <person name="Andre B."/>
            <person name="Baclet M.C."/>
            <person name="Barthe C."/>
            <person name="Baur A."/>
            <person name="Becam A.-M."/>
            <person name="Biteau N."/>
            <person name="Boles E."/>
            <person name="Brandt T."/>
            <person name="Brendel M."/>
            <person name="Brueckner M."/>
            <person name="Bussereau F."/>
            <person name="Christiansen C."/>
            <person name="Contreras R."/>
            <person name="Crouzet M."/>
            <person name="Cziepluch C."/>
            <person name="Demolis N."/>
            <person name="Delaveau T."/>
            <person name="Doignon F."/>
            <person name="Domdey H."/>
            <person name="Duesterhus S."/>
            <person name="Dubois E."/>
            <person name="Dujon B."/>
            <person name="El Bakkoury M."/>
            <person name="Entian K.-D."/>
            <person name="Feuermann M."/>
            <person name="Fiers W."/>
            <person name="Fobo G.M."/>
            <person name="Fritz C."/>
            <person name="Gassenhuber J."/>
            <person name="Glansdorff N."/>
            <person name="Goffeau A."/>
            <person name="Grivell L.A."/>
            <person name="de Haan M."/>
            <person name="Hein C."/>
            <person name="Herbert C.J."/>
            <person name="Hollenberg C.P."/>
            <person name="Holmstroem K."/>
            <person name="Jacq C."/>
            <person name="Jacquet M."/>
            <person name="Jauniaux J.-C."/>
            <person name="Jonniaux J.-L."/>
            <person name="Kallesoee T."/>
            <person name="Kiesau P."/>
            <person name="Kirchrath L."/>
            <person name="Koetter P."/>
            <person name="Korol S."/>
            <person name="Liebl S."/>
            <person name="Logghe M."/>
            <person name="Lohan A.J.E."/>
            <person name="Louis E.J."/>
            <person name="Li Z.Y."/>
            <person name="Maat M.J."/>
            <person name="Mallet L."/>
            <person name="Mannhaupt G."/>
            <person name="Messenguy F."/>
            <person name="Miosga T."/>
            <person name="Molemans F."/>
            <person name="Mueller S."/>
            <person name="Nasr F."/>
            <person name="Obermaier B."/>
            <person name="Perea J."/>
            <person name="Pierard A."/>
            <person name="Piravandi E."/>
            <person name="Pohl F.M."/>
            <person name="Pohl T.M."/>
            <person name="Potier S."/>
            <person name="Proft M."/>
            <person name="Purnelle B."/>
            <person name="Ramezani Rad M."/>
            <person name="Rieger M."/>
            <person name="Rose M."/>
            <person name="Schaaff-Gerstenschlaeger I."/>
            <person name="Scherens B."/>
            <person name="Schwarzlose C."/>
            <person name="Skala J."/>
            <person name="Slonimski P.P."/>
            <person name="Smits P.H.M."/>
            <person name="Souciet J.-L."/>
            <person name="Steensma H.Y."/>
            <person name="Stucka R."/>
            <person name="Urrestarazu L.A."/>
            <person name="van der Aart Q.J.M."/>
            <person name="Van Dyck L."/>
            <person name="Vassarotti A."/>
            <person name="Vetter I."/>
            <person name="Vierendeels F."/>
            <person name="Vissers S."/>
            <person name="Wagner G."/>
            <person name="de Wergifosse P."/>
            <person name="Wolfe K.H."/>
            <person name="Zagulski M."/>
            <person name="Zimmermann F.K."/>
            <person name="Mewes H.-W."/>
            <person name="Kleine K."/>
        </authorList>
    </citation>
    <scope>NUCLEOTIDE SEQUENCE [LARGE SCALE GENOMIC DNA]</scope>
    <source>
        <strain>ATCC 204508 / S288c</strain>
    </source>
</reference>
<reference key="2">
    <citation type="journal article" date="2014" name="G3 (Bethesda)">
        <title>The reference genome sequence of Saccharomyces cerevisiae: Then and now.</title>
        <authorList>
            <person name="Engel S.R."/>
            <person name="Dietrich F.S."/>
            <person name="Fisk D.G."/>
            <person name="Binkley G."/>
            <person name="Balakrishnan R."/>
            <person name="Costanzo M.C."/>
            <person name="Dwight S.S."/>
            <person name="Hitz B.C."/>
            <person name="Karra K."/>
            <person name="Nash R.S."/>
            <person name="Weng S."/>
            <person name="Wong E.D."/>
            <person name="Lloyd P."/>
            <person name="Skrzypek M.S."/>
            <person name="Miyasato S.R."/>
            <person name="Simison M."/>
            <person name="Cherry J.M."/>
        </authorList>
    </citation>
    <scope>GENOME REANNOTATION</scope>
    <source>
        <strain>ATCC 204508 / S288c</strain>
    </source>
</reference>